<reference key="1">
    <citation type="journal article" date="1996" name="Biochimie">
        <title>Two isozymes of P450nor of Cylindrocarpon tonkinense: molecular cloning of the cDNAs and genes, expressions in the yeast, and the putative NAD(P)H-binding site.</title>
        <authorList>
            <person name="Kudo T."/>
            <person name="Tomura D."/>
            <person name="Liu D.L."/>
            <person name="Dai X.Q."/>
            <person name="Shoun H."/>
        </authorList>
    </citation>
    <scope>NUCLEOTIDE SEQUENCE [GENOMIC DNA]</scope>
    <source>
        <strain>NBRC 30561 / CBS 483.96</strain>
    </source>
</reference>
<proteinExistence type="inferred from homology"/>
<dbReference type="EC" id="1.14.-.-"/>
<dbReference type="EMBL" id="D78512">
    <property type="protein sequence ID" value="BAA11409.1"/>
    <property type="molecule type" value="Genomic_DNA"/>
</dbReference>
<dbReference type="PIR" id="JC5674">
    <property type="entry name" value="JC5674"/>
</dbReference>
<dbReference type="PIR" id="PD0007">
    <property type="entry name" value="PD0007"/>
</dbReference>
<dbReference type="SMR" id="Q12599"/>
<dbReference type="BRENDA" id="1.7.2.5">
    <property type="organism ID" value="1783"/>
</dbReference>
<dbReference type="GO" id="GO:0020037">
    <property type="term" value="F:heme binding"/>
    <property type="evidence" value="ECO:0007669"/>
    <property type="project" value="InterPro"/>
</dbReference>
<dbReference type="GO" id="GO:0005506">
    <property type="term" value="F:iron ion binding"/>
    <property type="evidence" value="ECO:0007669"/>
    <property type="project" value="InterPro"/>
</dbReference>
<dbReference type="GO" id="GO:0004497">
    <property type="term" value="F:monooxygenase activity"/>
    <property type="evidence" value="ECO:0007669"/>
    <property type="project" value="UniProtKB-KW"/>
</dbReference>
<dbReference type="GO" id="GO:0016705">
    <property type="term" value="F:oxidoreductase activity, acting on paired donors, with incorporation or reduction of molecular oxygen"/>
    <property type="evidence" value="ECO:0007669"/>
    <property type="project" value="InterPro"/>
</dbReference>
<dbReference type="CDD" id="cd11030">
    <property type="entry name" value="CYP105-like"/>
    <property type="match status" value="1"/>
</dbReference>
<dbReference type="FunFam" id="1.10.630.10:FF:000018">
    <property type="entry name" value="Cytochrome P450 monooxygenase"/>
    <property type="match status" value="1"/>
</dbReference>
<dbReference type="Gene3D" id="1.10.630.10">
    <property type="entry name" value="Cytochrome P450"/>
    <property type="match status" value="1"/>
</dbReference>
<dbReference type="InterPro" id="IPR001128">
    <property type="entry name" value="Cyt_P450"/>
</dbReference>
<dbReference type="InterPro" id="IPR002397">
    <property type="entry name" value="Cyt_P450_B"/>
</dbReference>
<dbReference type="InterPro" id="IPR017972">
    <property type="entry name" value="Cyt_P450_CS"/>
</dbReference>
<dbReference type="InterPro" id="IPR036396">
    <property type="entry name" value="Cyt_P450_sf"/>
</dbReference>
<dbReference type="PANTHER" id="PTHR46696">
    <property type="entry name" value="P450, PUTATIVE (EUROFUNG)-RELATED"/>
    <property type="match status" value="1"/>
</dbReference>
<dbReference type="PANTHER" id="PTHR46696:SF6">
    <property type="entry name" value="P450, PUTATIVE (EUROFUNG)-RELATED"/>
    <property type="match status" value="1"/>
</dbReference>
<dbReference type="Pfam" id="PF00067">
    <property type="entry name" value="p450"/>
    <property type="match status" value="1"/>
</dbReference>
<dbReference type="PRINTS" id="PR00359">
    <property type="entry name" value="BP450"/>
</dbReference>
<dbReference type="SUPFAM" id="SSF48264">
    <property type="entry name" value="Cytochrome P450"/>
    <property type="match status" value="1"/>
</dbReference>
<dbReference type="PROSITE" id="PS00086">
    <property type="entry name" value="CYTOCHROME_P450"/>
    <property type="match status" value="1"/>
</dbReference>
<comment type="cofactor">
    <cofactor evidence="1">
        <name>heme</name>
        <dbReference type="ChEBI" id="CHEBI:30413"/>
    </cofactor>
</comment>
<comment type="similarity">
    <text evidence="2">Belongs to the cytochrome P450 family.</text>
</comment>
<gene>
    <name type="primary">CYP55A3</name>
</gene>
<evidence type="ECO:0000250" key="1"/>
<evidence type="ECO:0000305" key="2"/>
<protein>
    <recommendedName>
        <fullName>Cytochrome P450 55A3</fullName>
        <ecNumber>1.14.-.-</ecNumber>
    </recommendedName>
    <alternativeName>
        <fullName>Cytochrome P450NOR2</fullName>
    </alternativeName>
</protein>
<organism>
    <name type="scientific">Fusarium lichenicola</name>
    <name type="common">Cylindrocarpon lichenicola</name>
    <dbReference type="NCBI Taxonomy" id="42744"/>
    <lineage>
        <taxon>Eukaryota</taxon>
        <taxon>Fungi</taxon>
        <taxon>Dikarya</taxon>
        <taxon>Ascomycota</taxon>
        <taxon>Pezizomycotina</taxon>
        <taxon>Sordariomycetes</taxon>
        <taxon>Hypocreomycetidae</taxon>
        <taxon>Hypocreales</taxon>
        <taxon>Nectriaceae</taxon>
        <taxon>Fusarium</taxon>
        <taxon>Fusarium solani species complex</taxon>
    </lineage>
</organism>
<sequence length="408" mass="45382">MHATEDETTTIPRFPFQRASAFEPPAEFARLRANEPISQVELFDGSLAWLVVKHEDVCRVATDERLSKERTRLGFPELSAGGKAAAKNKPTFVDMDAPAHMNQRSMVEPFFTEDHVENLRPYIKETVQGLLNDMVANGCEEPVDLIEKFALPVPSYIIYTILGVPFEDLEYLTEQNAIRSNGSGTAQEAAAANQQLLKYLAKLVDQRLQEPKDDLIGRLVDQQLVPGHIEKSDAVQIAFLLLVAGNATMVNMIALGVVTLMQNPSQLEELKADPTLVPGFVEELCRYHTGSSMAMKRVAKEDMELGGKLIRAGEGIIASNQSANRDEDVFPNPDVFDMHRDFDSRDGLGFGFGPHRCIAELLAKAELEIVFETLFATLPDLRVSIPLDEIECTPRHKDVGIVRLPVKW</sequence>
<accession>Q12599</accession>
<feature type="chain" id="PRO_0000052041" description="Cytochrome P450 55A3">
    <location>
        <begin position="1"/>
        <end position="408"/>
    </location>
</feature>
<feature type="binding site" description="axial binding residue" evidence="1">
    <location>
        <position position="357"/>
    </location>
    <ligand>
        <name>heme</name>
        <dbReference type="ChEBI" id="CHEBI:30413"/>
    </ligand>
    <ligandPart>
        <name>Fe</name>
        <dbReference type="ChEBI" id="CHEBI:18248"/>
    </ligandPart>
</feature>
<name>NOR2_FUSLI</name>
<keyword id="KW-0349">Heme</keyword>
<keyword id="KW-0408">Iron</keyword>
<keyword id="KW-0479">Metal-binding</keyword>
<keyword id="KW-0503">Monooxygenase</keyword>
<keyword id="KW-0560">Oxidoreductase</keyword>